<keyword id="KW-0028">Amino-acid biosynthesis</keyword>
<keyword id="KW-0057">Aromatic amino acid biosynthesis</keyword>
<keyword id="KW-0456">Lyase</keyword>
<keyword id="KW-0822">Tryptophan biosynthesis</keyword>
<comment type="function">
    <text evidence="1">The alpha subunit is responsible for the aldol cleavage of indoleglycerol phosphate to indole and glyceraldehyde 3-phosphate.</text>
</comment>
<comment type="catalytic activity">
    <reaction evidence="1">
        <text>(1S,2R)-1-C-(indol-3-yl)glycerol 3-phosphate + L-serine = D-glyceraldehyde 3-phosphate + L-tryptophan + H2O</text>
        <dbReference type="Rhea" id="RHEA:10532"/>
        <dbReference type="ChEBI" id="CHEBI:15377"/>
        <dbReference type="ChEBI" id="CHEBI:33384"/>
        <dbReference type="ChEBI" id="CHEBI:57912"/>
        <dbReference type="ChEBI" id="CHEBI:58866"/>
        <dbReference type="ChEBI" id="CHEBI:59776"/>
        <dbReference type="EC" id="4.2.1.20"/>
    </reaction>
</comment>
<comment type="pathway">
    <text evidence="1">Amino-acid biosynthesis; L-tryptophan biosynthesis; L-tryptophan from chorismate: step 5/5.</text>
</comment>
<comment type="subunit">
    <text evidence="1">Tetramer of two alpha and two beta chains.</text>
</comment>
<comment type="similarity">
    <text evidence="1">Belongs to the TrpA family.</text>
</comment>
<evidence type="ECO:0000255" key="1">
    <source>
        <dbReference type="HAMAP-Rule" id="MF_00131"/>
    </source>
</evidence>
<name>TRPA_BACHK</name>
<gene>
    <name evidence="1" type="primary">trpA</name>
    <name type="ordered locus">BT9727_1142</name>
</gene>
<proteinExistence type="inferred from homology"/>
<feature type="chain" id="PRO_0000098739" description="Tryptophan synthase alpha chain">
    <location>
        <begin position="1"/>
        <end position="258"/>
    </location>
</feature>
<feature type="active site" description="Proton acceptor" evidence="1">
    <location>
        <position position="47"/>
    </location>
</feature>
<feature type="active site" description="Proton acceptor" evidence="1">
    <location>
        <position position="58"/>
    </location>
</feature>
<organism>
    <name type="scientific">Bacillus thuringiensis subsp. konkukian (strain 97-27)</name>
    <dbReference type="NCBI Taxonomy" id="281309"/>
    <lineage>
        <taxon>Bacteria</taxon>
        <taxon>Bacillati</taxon>
        <taxon>Bacillota</taxon>
        <taxon>Bacilli</taxon>
        <taxon>Bacillales</taxon>
        <taxon>Bacillaceae</taxon>
        <taxon>Bacillus</taxon>
        <taxon>Bacillus cereus group</taxon>
    </lineage>
</organism>
<accession>Q6HLU3</accession>
<protein>
    <recommendedName>
        <fullName evidence="1">Tryptophan synthase alpha chain</fullName>
        <ecNumber evidence="1">4.2.1.20</ecNumber>
    </recommendedName>
</protein>
<reference key="1">
    <citation type="journal article" date="2006" name="J. Bacteriol.">
        <title>Pathogenomic sequence analysis of Bacillus cereus and Bacillus thuringiensis isolates closely related to Bacillus anthracis.</title>
        <authorList>
            <person name="Han C.S."/>
            <person name="Xie G."/>
            <person name="Challacombe J.F."/>
            <person name="Altherr M.R."/>
            <person name="Bhotika S.S."/>
            <person name="Bruce D."/>
            <person name="Campbell C.S."/>
            <person name="Campbell M.L."/>
            <person name="Chen J."/>
            <person name="Chertkov O."/>
            <person name="Cleland C."/>
            <person name="Dimitrijevic M."/>
            <person name="Doggett N.A."/>
            <person name="Fawcett J.J."/>
            <person name="Glavina T."/>
            <person name="Goodwin L.A."/>
            <person name="Hill K.K."/>
            <person name="Hitchcock P."/>
            <person name="Jackson P.J."/>
            <person name="Keim P."/>
            <person name="Kewalramani A.R."/>
            <person name="Longmire J."/>
            <person name="Lucas S."/>
            <person name="Malfatti S."/>
            <person name="McMurry K."/>
            <person name="Meincke L.J."/>
            <person name="Misra M."/>
            <person name="Moseman B.L."/>
            <person name="Mundt M."/>
            <person name="Munk A.C."/>
            <person name="Okinaka R.T."/>
            <person name="Parson-Quintana B."/>
            <person name="Reilly L.P."/>
            <person name="Richardson P."/>
            <person name="Robinson D.L."/>
            <person name="Rubin E."/>
            <person name="Saunders E."/>
            <person name="Tapia R."/>
            <person name="Tesmer J.G."/>
            <person name="Thayer N."/>
            <person name="Thompson L.S."/>
            <person name="Tice H."/>
            <person name="Ticknor L.O."/>
            <person name="Wills P.L."/>
            <person name="Brettin T.S."/>
            <person name="Gilna P."/>
        </authorList>
    </citation>
    <scope>NUCLEOTIDE SEQUENCE [LARGE SCALE GENOMIC DNA]</scope>
    <source>
        <strain>97-27</strain>
    </source>
</reference>
<sequence>MGVERIKAAFENGKKAFIPYVMGGDGGLEILKERIRFLDEAGASIVEIGIPFSDPVADGPTIQRAGKRALDSGVTVKGIFQALIEVREEVQIPFVLMTYLNPVLAFGKERFIENCMEAGVDGIIVPDLPYEEQDIIAPLLREANIALIPLVTVTSPIERIKKITSESEGFVYAVTVAGVTGVRQNFKDEIHSYLEKVKSHTHLPVVAGFGISTKEHVEEMVTICDGVVVGSKVIELLENEKREEICEFIQATKQKEEA</sequence>
<dbReference type="EC" id="4.2.1.20" evidence="1"/>
<dbReference type="EMBL" id="AE017355">
    <property type="protein sequence ID" value="AAT59360.1"/>
    <property type="molecule type" value="Genomic_DNA"/>
</dbReference>
<dbReference type="RefSeq" id="WP_000537932.1">
    <property type="nucleotide sequence ID" value="NC_005957.1"/>
</dbReference>
<dbReference type="RefSeq" id="YP_035478.1">
    <property type="nucleotide sequence ID" value="NC_005957.1"/>
</dbReference>
<dbReference type="SMR" id="Q6HLU3"/>
<dbReference type="KEGG" id="btk:BT9727_1142"/>
<dbReference type="PATRIC" id="fig|281309.8.peg.1201"/>
<dbReference type="HOGENOM" id="CLU_016734_0_0_9"/>
<dbReference type="UniPathway" id="UPA00035">
    <property type="reaction ID" value="UER00044"/>
</dbReference>
<dbReference type="Proteomes" id="UP000001301">
    <property type="component" value="Chromosome"/>
</dbReference>
<dbReference type="GO" id="GO:0005829">
    <property type="term" value="C:cytosol"/>
    <property type="evidence" value="ECO:0007669"/>
    <property type="project" value="TreeGrafter"/>
</dbReference>
<dbReference type="GO" id="GO:0004834">
    <property type="term" value="F:tryptophan synthase activity"/>
    <property type="evidence" value="ECO:0007669"/>
    <property type="project" value="UniProtKB-UniRule"/>
</dbReference>
<dbReference type="CDD" id="cd04724">
    <property type="entry name" value="Tryptophan_synthase_alpha"/>
    <property type="match status" value="1"/>
</dbReference>
<dbReference type="FunFam" id="3.20.20.70:FF:000037">
    <property type="entry name" value="Tryptophan synthase alpha chain"/>
    <property type="match status" value="1"/>
</dbReference>
<dbReference type="Gene3D" id="3.20.20.70">
    <property type="entry name" value="Aldolase class I"/>
    <property type="match status" value="1"/>
</dbReference>
<dbReference type="HAMAP" id="MF_00131">
    <property type="entry name" value="Trp_synth_alpha"/>
    <property type="match status" value="1"/>
</dbReference>
<dbReference type="InterPro" id="IPR013785">
    <property type="entry name" value="Aldolase_TIM"/>
</dbReference>
<dbReference type="InterPro" id="IPR011060">
    <property type="entry name" value="RibuloseP-bd_barrel"/>
</dbReference>
<dbReference type="InterPro" id="IPR018204">
    <property type="entry name" value="Trp_synthase_alpha_AS"/>
</dbReference>
<dbReference type="InterPro" id="IPR002028">
    <property type="entry name" value="Trp_synthase_suA"/>
</dbReference>
<dbReference type="NCBIfam" id="TIGR00262">
    <property type="entry name" value="trpA"/>
    <property type="match status" value="1"/>
</dbReference>
<dbReference type="PANTHER" id="PTHR43406:SF1">
    <property type="entry name" value="TRYPTOPHAN SYNTHASE ALPHA CHAIN, CHLOROPLASTIC"/>
    <property type="match status" value="1"/>
</dbReference>
<dbReference type="PANTHER" id="PTHR43406">
    <property type="entry name" value="TRYPTOPHAN SYNTHASE, ALPHA CHAIN"/>
    <property type="match status" value="1"/>
</dbReference>
<dbReference type="Pfam" id="PF00290">
    <property type="entry name" value="Trp_syntA"/>
    <property type="match status" value="1"/>
</dbReference>
<dbReference type="SUPFAM" id="SSF51366">
    <property type="entry name" value="Ribulose-phoshate binding barrel"/>
    <property type="match status" value="1"/>
</dbReference>
<dbReference type="PROSITE" id="PS00167">
    <property type="entry name" value="TRP_SYNTHASE_ALPHA"/>
    <property type="match status" value="1"/>
</dbReference>